<protein>
    <recommendedName>
        <fullName>Carbon monoxide dehydrogenase</fullName>
        <shortName>CODH</shortName>
        <ecNumber evidence="1">1.2.7.4</ecNumber>
    </recommendedName>
</protein>
<dbReference type="EC" id="1.2.7.4" evidence="1"/>
<dbReference type="EMBL" id="AE000782">
    <property type="protein sequence ID" value="AAB89403.1"/>
    <property type="molecule type" value="Genomic_DNA"/>
</dbReference>
<dbReference type="PIR" id="H69480">
    <property type="entry name" value="H69480"/>
</dbReference>
<dbReference type="RefSeq" id="WP_010879343.1">
    <property type="nucleotide sequence ID" value="NC_000917.1"/>
</dbReference>
<dbReference type="SMR" id="O28429"/>
<dbReference type="STRING" id="224325.AF_1849"/>
<dbReference type="PaxDb" id="224325-AF_1849"/>
<dbReference type="EnsemblBacteria" id="AAB89403">
    <property type="protein sequence ID" value="AAB89403"/>
    <property type="gene ID" value="AF_1849"/>
</dbReference>
<dbReference type="GeneID" id="24795591"/>
<dbReference type="KEGG" id="afu:AF_1849"/>
<dbReference type="eggNOG" id="arCOG02429">
    <property type="taxonomic scope" value="Archaea"/>
</dbReference>
<dbReference type="HOGENOM" id="CLU_030631_0_0_2"/>
<dbReference type="OrthoDB" id="146433at2157"/>
<dbReference type="PhylomeDB" id="O28429"/>
<dbReference type="Proteomes" id="UP000002199">
    <property type="component" value="Chromosome"/>
</dbReference>
<dbReference type="GO" id="GO:0051539">
    <property type="term" value="F:4 iron, 4 sulfur cluster binding"/>
    <property type="evidence" value="ECO:0007669"/>
    <property type="project" value="UniProtKB-KW"/>
</dbReference>
<dbReference type="GO" id="GO:0043885">
    <property type="term" value="F:anaerobic carbon-monoxide dehydrogenase activity"/>
    <property type="evidence" value="ECO:0007669"/>
    <property type="project" value="UniProtKB-EC"/>
</dbReference>
<dbReference type="GO" id="GO:0050418">
    <property type="term" value="F:hydroxylamine reductase activity"/>
    <property type="evidence" value="ECO:0007669"/>
    <property type="project" value="TreeGrafter"/>
</dbReference>
<dbReference type="GO" id="GO:0016151">
    <property type="term" value="F:nickel cation binding"/>
    <property type="evidence" value="ECO:0007669"/>
    <property type="project" value="InterPro"/>
</dbReference>
<dbReference type="GO" id="GO:0004601">
    <property type="term" value="F:peroxidase activity"/>
    <property type="evidence" value="ECO:0007669"/>
    <property type="project" value="TreeGrafter"/>
</dbReference>
<dbReference type="GO" id="GO:0006091">
    <property type="term" value="P:generation of precursor metabolites and energy"/>
    <property type="evidence" value="ECO:0007669"/>
    <property type="project" value="InterPro"/>
</dbReference>
<dbReference type="GO" id="GO:0042542">
    <property type="term" value="P:response to hydrogen peroxide"/>
    <property type="evidence" value="ECO:0007669"/>
    <property type="project" value="TreeGrafter"/>
</dbReference>
<dbReference type="CDD" id="cd01915">
    <property type="entry name" value="CODH"/>
    <property type="match status" value="1"/>
</dbReference>
<dbReference type="FunFam" id="3.40.50.2030:FF:000003">
    <property type="entry name" value="Carbon monoxide dehydrogenase"/>
    <property type="match status" value="1"/>
</dbReference>
<dbReference type="Gene3D" id="1.20.1270.30">
    <property type="match status" value="1"/>
</dbReference>
<dbReference type="Gene3D" id="3.40.50.2030">
    <property type="match status" value="2"/>
</dbReference>
<dbReference type="InterPro" id="IPR016101">
    <property type="entry name" value="CO_DH_a-bundle"/>
</dbReference>
<dbReference type="InterPro" id="IPR010047">
    <property type="entry name" value="CODH"/>
</dbReference>
<dbReference type="InterPro" id="IPR004137">
    <property type="entry name" value="HCP/CODH"/>
</dbReference>
<dbReference type="InterPro" id="IPR016099">
    <property type="entry name" value="Prismane-like_a/b-sand"/>
</dbReference>
<dbReference type="InterPro" id="IPR011254">
    <property type="entry name" value="Prismane-like_sf"/>
</dbReference>
<dbReference type="NCBIfam" id="TIGR01702">
    <property type="entry name" value="CO_DH_cata"/>
    <property type="match status" value="1"/>
</dbReference>
<dbReference type="PANTHER" id="PTHR30109:SF4">
    <property type="entry name" value="CARBON MONOXIDE DEHYDROGENASE"/>
    <property type="match status" value="1"/>
</dbReference>
<dbReference type="PANTHER" id="PTHR30109">
    <property type="entry name" value="HYDROXYLAMINE REDUCTASE"/>
    <property type="match status" value="1"/>
</dbReference>
<dbReference type="Pfam" id="PF03063">
    <property type="entry name" value="Prismane"/>
    <property type="match status" value="1"/>
</dbReference>
<dbReference type="PIRSF" id="PIRSF005023">
    <property type="entry name" value="CODH"/>
    <property type="match status" value="1"/>
</dbReference>
<dbReference type="SUPFAM" id="SSF56821">
    <property type="entry name" value="Prismane protein-like"/>
    <property type="match status" value="1"/>
</dbReference>
<proteinExistence type="inferred from homology"/>
<reference key="1">
    <citation type="journal article" date="1997" name="Nature">
        <title>The complete genome sequence of the hyperthermophilic, sulphate-reducing archaeon Archaeoglobus fulgidus.</title>
        <authorList>
            <person name="Klenk H.-P."/>
            <person name="Clayton R.A."/>
            <person name="Tomb J.-F."/>
            <person name="White O."/>
            <person name="Nelson K.E."/>
            <person name="Ketchum K.A."/>
            <person name="Dodson R.J."/>
            <person name="Gwinn M.L."/>
            <person name="Hickey E.K."/>
            <person name="Peterson J.D."/>
            <person name="Richardson D.L."/>
            <person name="Kerlavage A.R."/>
            <person name="Graham D.E."/>
            <person name="Kyrpides N.C."/>
            <person name="Fleischmann R.D."/>
            <person name="Quackenbush J."/>
            <person name="Lee N.H."/>
            <person name="Sutton G.G."/>
            <person name="Gill S.R."/>
            <person name="Kirkness E.F."/>
            <person name="Dougherty B.A."/>
            <person name="McKenney K."/>
            <person name="Adams M.D."/>
            <person name="Loftus B.J."/>
            <person name="Peterson S.N."/>
            <person name="Reich C.I."/>
            <person name="McNeil L.K."/>
            <person name="Badger J.H."/>
            <person name="Glodek A."/>
            <person name="Zhou L."/>
            <person name="Overbeek R."/>
            <person name="Gocayne J.D."/>
            <person name="Weidman J.F."/>
            <person name="McDonald L.A."/>
            <person name="Utterback T.R."/>
            <person name="Cotton M.D."/>
            <person name="Spriggs T."/>
            <person name="Artiach P."/>
            <person name="Kaine B.P."/>
            <person name="Sykes S.M."/>
            <person name="Sadow P.W."/>
            <person name="D'Andrea K.P."/>
            <person name="Bowman C."/>
            <person name="Fujii C."/>
            <person name="Garland S.A."/>
            <person name="Mason T.M."/>
            <person name="Olsen G.J."/>
            <person name="Fraser C.M."/>
            <person name="Smith H.O."/>
            <person name="Woese C.R."/>
            <person name="Venter J.C."/>
        </authorList>
    </citation>
    <scope>NUCLEOTIDE SEQUENCE [LARGE SCALE GENOMIC DNA]</scope>
    <source>
        <strain>ATCC 49558 / DSM 4304 / JCM 9628 / NBRC 100126 / VC-16</strain>
    </source>
</reference>
<sequence>MKIEGKVSEHESINMMYERVSKEGVTNIVDRFNAQEKGRCPFCEKGLSCQLCSMGPCRISKDKPTGACGIDAAGMVVRNFTHKNMLGTEAYTYHAIEAAKTLKATAEGKTIYEIKDVEKLKWFAKLLGIEGEDVNELAAKVADFVISDLSSLEKSRLVEIFAPEKRKELWEKLGIFPSGVFQELLTMGSSAMTNVDSNYVSLAKKSMSMSIATCMAAQIALETIQDILFGTPMPHESHSDLGILDPEYVNIAVNGHEPFVGIALIKLAEREEIQEKARKAGAKGLRIIGFIETGQEILQRVDSPVFAGIVGNWIVQEYALATGCVDVFAADMNCTLPSLPEYQRYGVKIVPVSRLVRLKGIDEGLDYEPEKAEEIAMKLIDMAIENFKQRDKSKAVKVEQKKKIVVGFSPEAILKALNGDLNVLLDAIKKGDIKGVVALVSCTTLKNGPHDSSTVTIAKELIKRDILVLSMGCGNAALQVAGLTSMEAVELAGEKLKAVCKALNIPPVLSFGTCTDTGRAAYLVRLIADALGVDVPQLPVAVTAPEYMEQKATIDAVFAVAYGLTTHVSPVPPITGSEDAVKLFTEDVEKLTGGKVVVEEDPLKAAELLEKVIEEKRKALGI</sequence>
<name>COOS_ARCFU</name>
<comment type="function">
    <text evidence="1">CODH oxidizes carbon monoxide coupled, via CooF, to the reduction of a hydrogen cation by a hydrogenase (possibly CooH).</text>
</comment>
<comment type="catalytic activity">
    <reaction evidence="1">
        <text>CO + 2 oxidized [2Fe-2S]-[ferredoxin] + H2O = 2 reduced [2Fe-2S]-[ferredoxin] + CO2 + 2 H(+)</text>
        <dbReference type="Rhea" id="RHEA:21040"/>
        <dbReference type="Rhea" id="RHEA-COMP:10000"/>
        <dbReference type="Rhea" id="RHEA-COMP:10001"/>
        <dbReference type="ChEBI" id="CHEBI:15377"/>
        <dbReference type="ChEBI" id="CHEBI:15378"/>
        <dbReference type="ChEBI" id="CHEBI:16526"/>
        <dbReference type="ChEBI" id="CHEBI:17245"/>
        <dbReference type="ChEBI" id="CHEBI:33737"/>
        <dbReference type="ChEBI" id="CHEBI:33738"/>
        <dbReference type="EC" id="1.2.7.4"/>
    </reaction>
</comment>
<comment type="cofactor">
    <cofactor evidence="1">
        <name>[4Fe-4S] cluster</name>
        <dbReference type="ChEBI" id="CHEBI:49883"/>
    </cofactor>
    <text evidence="1">Binds 3 [4Fe-4S] clusters per homodimer.</text>
</comment>
<comment type="cofactor">
    <cofactor evidence="1">
        <name>[Ni-4Fe-5S] cluster</name>
        <dbReference type="ChEBI" id="CHEBI:177874"/>
    </cofactor>
    <text evidence="1">Binds 2 [Ni-4Fe-5S] clusters per homodimer.</text>
</comment>
<comment type="subunit">
    <text evidence="1">Homodimer.</text>
</comment>
<comment type="domain">
    <text evidence="1">Cluster B is an all-cysteinyl-liganded 4Fe-4S cluster; cluster C is a mixed Ni-Fe-S cluster which is the active site of CO oxidation. Cluster D is also an all-cysteinyl-liganded 4Fe-4S cluster that bridges the two subunits of the CODH dimer.</text>
</comment>
<comment type="similarity">
    <text evidence="2">Belongs to the Ni-containing carbon monoxide dehydrogenase family.</text>
</comment>
<comment type="caution">
    <text evidence="2">This protein lacks the conserved Cys in positions 48 and 292; they are replaced by a Ser and a Glu, respectively. It is therefore possible that the C- and D-clusters are either altered or missing in this protein, which may not form homodimers.</text>
</comment>
<organism>
    <name type="scientific">Archaeoglobus fulgidus (strain ATCC 49558 / DSM 4304 / JCM 9628 / NBRC 100126 / VC-16)</name>
    <dbReference type="NCBI Taxonomy" id="224325"/>
    <lineage>
        <taxon>Archaea</taxon>
        <taxon>Methanobacteriati</taxon>
        <taxon>Methanobacteriota</taxon>
        <taxon>Archaeoglobi</taxon>
        <taxon>Archaeoglobales</taxon>
        <taxon>Archaeoglobaceae</taxon>
        <taxon>Archaeoglobus</taxon>
    </lineage>
</organism>
<evidence type="ECO:0000250" key="1">
    <source>
        <dbReference type="UniProtKB" id="Q9F8A8"/>
    </source>
</evidence>
<evidence type="ECO:0000305" key="2"/>
<feature type="chain" id="PRO_0000157140" description="Carbon monoxide dehydrogenase">
    <location>
        <begin position="1"/>
        <end position="622"/>
    </location>
</feature>
<feature type="binding site" evidence="1">
    <location>
        <position position="40"/>
    </location>
    <ligand>
        <name>[4Fe-4S] cluster</name>
        <dbReference type="ChEBI" id="CHEBI:49883"/>
        <label>1</label>
        <note>ligand shared between dimeric partners</note>
    </ligand>
</feature>
<feature type="binding site" evidence="1">
    <location>
        <position position="49"/>
    </location>
    <ligand>
        <name>[4Fe-4S] cluster</name>
        <dbReference type="ChEBI" id="CHEBI:49883"/>
        <label>2</label>
    </ligand>
</feature>
<feature type="binding site" evidence="1">
    <location>
        <position position="52"/>
    </location>
    <ligand>
        <name>[4Fe-4S] cluster</name>
        <dbReference type="ChEBI" id="CHEBI:49883"/>
        <label>2</label>
    </ligand>
</feature>
<feature type="binding site" evidence="1">
    <location>
        <position position="57"/>
    </location>
    <ligand>
        <name>[4Fe-4S] cluster</name>
        <dbReference type="ChEBI" id="CHEBI:49883"/>
        <label>2</label>
    </ligand>
</feature>
<feature type="binding site" evidence="1">
    <location>
        <position position="68"/>
    </location>
    <ligand>
        <name>[4Fe-4S] cluster</name>
        <dbReference type="ChEBI" id="CHEBI:49883"/>
        <label>2</label>
    </ligand>
</feature>
<feature type="binding site" evidence="1">
    <location>
        <position position="256"/>
    </location>
    <ligand>
        <name>[Ni-4Fe-5S] cluster</name>
        <dbReference type="ChEBI" id="CHEBI:177874"/>
    </ligand>
</feature>
<feature type="binding site" evidence="1">
    <location>
        <position position="334"/>
    </location>
    <ligand>
        <name>[Ni-4Fe-5S] cluster</name>
        <dbReference type="ChEBI" id="CHEBI:177874"/>
    </ligand>
</feature>
<feature type="binding site" evidence="1">
    <location>
        <position position="442"/>
    </location>
    <ligand>
        <name>[Ni-4Fe-5S] cluster</name>
        <dbReference type="ChEBI" id="CHEBI:177874"/>
    </ligand>
</feature>
<feature type="binding site" evidence="1">
    <location>
        <position position="473"/>
    </location>
    <ligand>
        <name>[Ni-4Fe-5S] cluster</name>
        <dbReference type="ChEBI" id="CHEBI:177874"/>
    </ligand>
</feature>
<feature type="binding site" evidence="1">
    <location>
        <position position="514"/>
    </location>
    <ligand>
        <name>[Ni-4Fe-5S] cluster</name>
        <dbReference type="ChEBI" id="CHEBI:177874"/>
    </ligand>
</feature>
<accession>O28429</accession>
<gene>
    <name type="primary">cooS</name>
    <name type="ordered locus">AF_1849</name>
</gene>
<keyword id="KW-0004">4Fe-4S</keyword>
<keyword id="KW-0408">Iron</keyword>
<keyword id="KW-0411">Iron-sulfur</keyword>
<keyword id="KW-0479">Metal-binding</keyword>
<keyword id="KW-0533">Nickel</keyword>
<keyword id="KW-0560">Oxidoreductase</keyword>
<keyword id="KW-1185">Reference proteome</keyword>